<keyword id="KW-0131">Cell cycle</keyword>
<keyword id="KW-0132">Cell division</keyword>
<keyword id="KW-0227">DNA damage</keyword>
<keyword id="KW-0717">Septation</keyword>
<keyword id="KW-0742">SOS response</keyword>
<organism>
    <name type="scientific">Shigella boydii serotype 4 (strain Sb227)</name>
    <dbReference type="NCBI Taxonomy" id="300268"/>
    <lineage>
        <taxon>Bacteria</taxon>
        <taxon>Pseudomonadati</taxon>
        <taxon>Pseudomonadota</taxon>
        <taxon>Gammaproteobacteria</taxon>
        <taxon>Enterobacterales</taxon>
        <taxon>Enterobacteriaceae</taxon>
        <taxon>Shigella</taxon>
    </lineage>
</organism>
<evidence type="ECO:0000255" key="1">
    <source>
        <dbReference type="HAMAP-Rule" id="MF_01179"/>
    </source>
</evidence>
<gene>
    <name evidence="1" type="primary">sulA</name>
    <name type="ordered locus">SBO_2273</name>
</gene>
<reference key="1">
    <citation type="journal article" date="2005" name="Nucleic Acids Res.">
        <title>Genome dynamics and diversity of Shigella species, the etiologic agents of bacillary dysentery.</title>
        <authorList>
            <person name="Yang F."/>
            <person name="Yang J."/>
            <person name="Zhang X."/>
            <person name="Chen L."/>
            <person name="Jiang Y."/>
            <person name="Yan Y."/>
            <person name="Tang X."/>
            <person name="Wang J."/>
            <person name="Xiong Z."/>
            <person name="Dong J."/>
            <person name="Xue Y."/>
            <person name="Zhu Y."/>
            <person name="Xu X."/>
            <person name="Sun L."/>
            <person name="Chen S."/>
            <person name="Nie H."/>
            <person name="Peng J."/>
            <person name="Xu J."/>
            <person name="Wang Y."/>
            <person name="Yuan Z."/>
            <person name="Wen Y."/>
            <person name="Yao Z."/>
            <person name="Shen Y."/>
            <person name="Qiang B."/>
            <person name="Hou Y."/>
            <person name="Yu J."/>
            <person name="Jin Q."/>
        </authorList>
    </citation>
    <scope>NUCLEOTIDE SEQUENCE [LARGE SCALE GENOMIC DNA]</scope>
    <source>
        <strain>Sb227</strain>
    </source>
</reference>
<comment type="function">
    <text evidence="1">Component of the SOS system and an inhibitor of cell division. Accumulation of SulA causes rapid cessation of cell division and the appearance of long, non-septate filaments. In the presence of GTP, binds a polymerization-competent form of FtsZ in a 1:1 ratio, thus inhibiting FtsZ polymerization and therefore preventing it from participating in the assembly of the Z ring. This mechanism prevents the premature segregation of damaged DNA to daughter cells during cell division.</text>
</comment>
<comment type="subunit">
    <text evidence="1">Interacts with FtsZ.</text>
</comment>
<comment type="induction">
    <text evidence="1">By DNA damage, as part of the SOS response.</text>
</comment>
<comment type="PTM">
    <text evidence="1">Is rapidly cleaved and degraded by the Lon protease once DNA damage is repaired.</text>
</comment>
<comment type="similarity">
    <text evidence="1">Belongs to the SulA family.</text>
</comment>
<name>SULA_SHIBS</name>
<feature type="chain" id="PRO_0000343975" description="Cell division inhibitor SulA">
    <location>
        <begin position="1"/>
        <end position="169"/>
    </location>
</feature>
<feature type="region of interest" description="FtsZ binding" evidence="1">
    <location>
        <begin position="106"/>
        <end position="112"/>
    </location>
</feature>
<feature type="region of interest" description="Lon protease binding" evidence="1">
    <location>
        <begin position="162"/>
        <end position="169"/>
    </location>
</feature>
<feature type="site" description="Essential for degradation by Lon protease" evidence="1">
    <location>
        <position position="169"/>
    </location>
</feature>
<proteinExistence type="inferred from homology"/>
<protein>
    <recommendedName>
        <fullName evidence="1">Cell division inhibitor SulA</fullName>
    </recommendedName>
</protein>
<dbReference type="EMBL" id="CP000036">
    <property type="protein sequence ID" value="ABB66837.1"/>
    <property type="molecule type" value="Genomic_DNA"/>
</dbReference>
<dbReference type="RefSeq" id="WP_000288712.1">
    <property type="nucleotide sequence ID" value="NC_007613.1"/>
</dbReference>
<dbReference type="SMR" id="Q31YM1"/>
<dbReference type="KEGG" id="sbo:SBO_2273"/>
<dbReference type="HOGENOM" id="CLU_118972_1_0_6"/>
<dbReference type="Proteomes" id="UP000007067">
    <property type="component" value="Chromosome"/>
</dbReference>
<dbReference type="GO" id="GO:0000917">
    <property type="term" value="P:division septum assembly"/>
    <property type="evidence" value="ECO:0007669"/>
    <property type="project" value="UniProtKB-KW"/>
</dbReference>
<dbReference type="GO" id="GO:0006281">
    <property type="term" value="P:DNA repair"/>
    <property type="evidence" value="ECO:0007669"/>
    <property type="project" value="TreeGrafter"/>
</dbReference>
<dbReference type="GO" id="GO:0051782">
    <property type="term" value="P:negative regulation of cell division"/>
    <property type="evidence" value="ECO:0007669"/>
    <property type="project" value="UniProtKB-UniRule"/>
</dbReference>
<dbReference type="GO" id="GO:0009432">
    <property type="term" value="P:SOS response"/>
    <property type="evidence" value="ECO:0007669"/>
    <property type="project" value="UniProtKB-UniRule"/>
</dbReference>
<dbReference type="FunFam" id="3.40.50.300:FF:000417">
    <property type="entry name" value="Cell division inhibitor SulA"/>
    <property type="match status" value="1"/>
</dbReference>
<dbReference type="Gene3D" id="3.40.50.300">
    <property type="entry name" value="P-loop containing nucleotide triphosphate hydrolases"/>
    <property type="match status" value="1"/>
</dbReference>
<dbReference type="HAMAP" id="MF_01179">
    <property type="entry name" value="SulA"/>
    <property type="match status" value="1"/>
</dbReference>
<dbReference type="InterPro" id="IPR004596">
    <property type="entry name" value="Cell_div_suppressor_SulA"/>
</dbReference>
<dbReference type="InterPro" id="IPR027417">
    <property type="entry name" value="P-loop_NTPase"/>
</dbReference>
<dbReference type="InterPro" id="IPR050356">
    <property type="entry name" value="SulA_CellDiv_inhibitor"/>
</dbReference>
<dbReference type="InterPro" id="IPR047696">
    <property type="entry name" value="SulA_enterobact"/>
</dbReference>
<dbReference type="NCBIfam" id="NF007892">
    <property type="entry name" value="PRK10595.1"/>
    <property type="match status" value="1"/>
</dbReference>
<dbReference type="NCBIfam" id="TIGR00623">
    <property type="entry name" value="SOS_SulA_coli"/>
    <property type="match status" value="1"/>
</dbReference>
<dbReference type="PANTHER" id="PTHR35369">
    <property type="entry name" value="BLR3025 PROTEIN-RELATED"/>
    <property type="match status" value="1"/>
</dbReference>
<dbReference type="PANTHER" id="PTHR35369:SF4">
    <property type="entry name" value="CELL DIVISION INHIBITOR SULA"/>
    <property type="match status" value="1"/>
</dbReference>
<dbReference type="Pfam" id="PF03846">
    <property type="entry name" value="SulA"/>
    <property type="match status" value="1"/>
</dbReference>
<dbReference type="PIRSF" id="PIRSF003093">
    <property type="entry name" value="SulA"/>
    <property type="match status" value="1"/>
</dbReference>
<dbReference type="SUPFAM" id="SSF52540">
    <property type="entry name" value="P-loop containing nucleoside triphosphate hydrolases"/>
    <property type="match status" value="1"/>
</dbReference>
<accession>Q31YM1</accession>
<sequence length="169" mass="18831">MYTSGYAHRSSSFSSAASKIARVSTENTTAGLISEVVYREDQPMMTQLLLLPLLQQLGQQSRWQLWLTPQQKLSREWVQASGLPLTKVMQISQLSPCHTVESMVRALRTGNYSVVIGWLADDLTEEEHAELVDAANEGNAMGFIMRPVSASSHTTRQLSGLKIHSNLYH</sequence>